<protein>
    <recommendedName>
        <fullName evidence="1">Large ribosomal subunit protein uL5</fullName>
    </recommendedName>
    <alternativeName>
        <fullName evidence="2">50S ribosomal protein L5</fullName>
    </alternativeName>
</protein>
<keyword id="KW-0687">Ribonucleoprotein</keyword>
<keyword id="KW-0689">Ribosomal protein</keyword>
<keyword id="KW-0694">RNA-binding</keyword>
<keyword id="KW-0699">rRNA-binding</keyword>
<keyword id="KW-0820">tRNA-binding</keyword>
<sequence length="179" mass="20396">MTTFYDYYKSKIVKKLMMELNYSSIMQVPKIDKITLNMGVGAASSDKKVLDNAVLDLTAISGQKPLITKARKSVAGFKIRQGYPIGCKVTLRGKRKWDFFERLIVIAIPRIRDFRGLSTNSFDGKGNYSLGIREQIIFPEIDYDKIDRVRGLDITITTTANSDHEARLLLSSFNFPFRK</sequence>
<accession>Q8K962</accession>
<evidence type="ECO:0000255" key="1">
    <source>
        <dbReference type="HAMAP-Rule" id="MF_01333"/>
    </source>
</evidence>
<evidence type="ECO:0000305" key="2"/>
<dbReference type="EMBL" id="AE013218">
    <property type="protein sequence ID" value="AAM68036.1"/>
    <property type="molecule type" value="Genomic_DNA"/>
</dbReference>
<dbReference type="RefSeq" id="WP_011054002.1">
    <property type="nucleotide sequence ID" value="NC_004061.1"/>
</dbReference>
<dbReference type="SMR" id="Q8K962"/>
<dbReference type="STRING" id="198804.BUsg_493"/>
<dbReference type="GeneID" id="93003968"/>
<dbReference type="KEGG" id="bas:BUsg_493"/>
<dbReference type="eggNOG" id="COG0094">
    <property type="taxonomic scope" value="Bacteria"/>
</dbReference>
<dbReference type="HOGENOM" id="CLU_061015_2_1_6"/>
<dbReference type="Proteomes" id="UP000000416">
    <property type="component" value="Chromosome"/>
</dbReference>
<dbReference type="GO" id="GO:1990904">
    <property type="term" value="C:ribonucleoprotein complex"/>
    <property type="evidence" value="ECO:0007669"/>
    <property type="project" value="UniProtKB-KW"/>
</dbReference>
<dbReference type="GO" id="GO:0005840">
    <property type="term" value="C:ribosome"/>
    <property type="evidence" value="ECO:0007669"/>
    <property type="project" value="UniProtKB-KW"/>
</dbReference>
<dbReference type="GO" id="GO:0019843">
    <property type="term" value="F:rRNA binding"/>
    <property type="evidence" value="ECO:0007669"/>
    <property type="project" value="UniProtKB-UniRule"/>
</dbReference>
<dbReference type="GO" id="GO:0003735">
    <property type="term" value="F:structural constituent of ribosome"/>
    <property type="evidence" value="ECO:0007669"/>
    <property type="project" value="InterPro"/>
</dbReference>
<dbReference type="GO" id="GO:0000049">
    <property type="term" value="F:tRNA binding"/>
    <property type="evidence" value="ECO:0007669"/>
    <property type="project" value="UniProtKB-UniRule"/>
</dbReference>
<dbReference type="GO" id="GO:0006412">
    <property type="term" value="P:translation"/>
    <property type="evidence" value="ECO:0007669"/>
    <property type="project" value="UniProtKB-UniRule"/>
</dbReference>
<dbReference type="FunFam" id="3.30.1440.10:FF:000001">
    <property type="entry name" value="50S ribosomal protein L5"/>
    <property type="match status" value="1"/>
</dbReference>
<dbReference type="Gene3D" id="3.30.1440.10">
    <property type="match status" value="1"/>
</dbReference>
<dbReference type="HAMAP" id="MF_01333_B">
    <property type="entry name" value="Ribosomal_uL5_B"/>
    <property type="match status" value="1"/>
</dbReference>
<dbReference type="InterPro" id="IPR002132">
    <property type="entry name" value="Ribosomal_uL5"/>
</dbReference>
<dbReference type="InterPro" id="IPR020930">
    <property type="entry name" value="Ribosomal_uL5_bac-type"/>
</dbReference>
<dbReference type="InterPro" id="IPR031309">
    <property type="entry name" value="Ribosomal_uL5_C"/>
</dbReference>
<dbReference type="InterPro" id="IPR020929">
    <property type="entry name" value="Ribosomal_uL5_CS"/>
</dbReference>
<dbReference type="InterPro" id="IPR022803">
    <property type="entry name" value="Ribosomal_uL5_dom_sf"/>
</dbReference>
<dbReference type="InterPro" id="IPR031310">
    <property type="entry name" value="Ribosomal_uL5_N"/>
</dbReference>
<dbReference type="NCBIfam" id="NF000585">
    <property type="entry name" value="PRK00010.1"/>
    <property type="match status" value="1"/>
</dbReference>
<dbReference type="PANTHER" id="PTHR11994">
    <property type="entry name" value="60S RIBOSOMAL PROTEIN L11-RELATED"/>
    <property type="match status" value="1"/>
</dbReference>
<dbReference type="Pfam" id="PF00281">
    <property type="entry name" value="Ribosomal_L5"/>
    <property type="match status" value="1"/>
</dbReference>
<dbReference type="Pfam" id="PF00673">
    <property type="entry name" value="Ribosomal_L5_C"/>
    <property type="match status" value="1"/>
</dbReference>
<dbReference type="PIRSF" id="PIRSF002161">
    <property type="entry name" value="Ribosomal_L5"/>
    <property type="match status" value="1"/>
</dbReference>
<dbReference type="SUPFAM" id="SSF55282">
    <property type="entry name" value="RL5-like"/>
    <property type="match status" value="1"/>
</dbReference>
<dbReference type="PROSITE" id="PS00358">
    <property type="entry name" value="RIBOSOMAL_L5"/>
    <property type="match status" value="1"/>
</dbReference>
<name>RL5_BUCAP</name>
<proteinExistence type="inferred from homology"/>
<organism>
    <name type="scientific">Buchnera aphidicola subsp. Schizaphis graminum (strain Sg)</name>
    <dbReference type="NCBI Taxonomy" id="198804"/>
    <lineage>
        <taxon>Bacteria</taxon>
        <taxon>Pseudomonadati</taxon>
        <taxon>Pseudomonadota</taxon>
        <taxon>Gammaproteobacteria</taxon>
        <taxon>Enterobacterales</taxon>
        <taxon>Erwiniaceae</taxon>
        <taxon>Buchnera</taxon>
    </lineage>
</organism>
<reference key="1">
    <citation type="journal article" date="2002" name="Science">
        <title>50 million years of genomic stasis in endosymbiotic bacteria.</title>
        <authorList>
            <person name="Tamas I."/>
            <person name="Klasson L."/>
            <person name="Canbaeck B."/>
            <person name="Naeslund A.K."/>
            <person name="Eriksson A.-S."/>
            <person name="Wernegreen J.J."/>
            <person name="Sandstroem J.P."/>
            <person name="Moran N.A."/>
            <person name="Andersson S.G.E."/>
        </authorList>
    </citation>
    <scope>NUCLEOTIDE SEQUENCE [LARGE SCALE GENOMIC DNA]</scope>
    <source>
        <strain>Sg</strain>
    </source>
</reference>
<comment type="function">
    <text evidence="1">This is one of the proteins that bind and probably mediate the attachment of the 5S RNA into the large ribosomal subunit, where it forms part of the central protuberance. In the 70S ribosome it contacts protein S13 of the 30S subunit (bridge B1b), connecting the 2 subunits; this bridge is implicated in subunit movement. Contacts the P site tRNA; the 5S rRNA and some of its associated proteins might help stabilize positioning of ribosome-bound tRNAs.</text>
</comment>
<comment type="subunit">
    <text evidence="1">Part of the 50S ribosomal subunit; part of the 5S rRNA/L5/L18/L25 subcomplex. Contacts the 5S rRNA and the P site tRNA. Forms a bridge to the 30S subunit in the 70S ribosome.</text>
</comment>
<comment type="similarity">
    <text evidence="1">Belongs to the universal ribosomal protein uL5 family.</text>
</comment>
<feature type="chain" id="PRO_0000124905" description="Large ribosomal subunit protein uL5">
    <location>
        <begin position="1"/>
        <end position="179"/>
    </location>
</feature>
<gene>
    <name evidence="1" type="primary">rplE</name>
    <name type="ordered locus">BUsg_493</name>
</gene>